<accession>B8EMR8</accession>
<organism>
    <name type="scientific">Methylocella silvestris (strain DSM 15510 / CIP 108128 / LMG 27833 / NCIMB 13906 / BL2)</name>
    <dbReference type="NCBI Taxonomy" id="395965"/>
    <lineage>
        <taxon>Bacteria</taxon>
        <taxon>Pseudomonadati</taxon>
        <taxon>Pseudomonadota</taxon>
        <taxon>Alphaproteobacteria</taxon>
        <taxon>Hyphomicrobiales</taxon>
        <taxon>Beijerinckiaceae</taxon>
        <taxon>Methylocella</taxon>
    </lineage>
</organism>
<reference key="1">
    <citation type="journal article" date="2010" name="J. Bacteriol.">
        <title>Complete genome sequence of the aerobic facultative methanotroph Methylocella silvestris BL2.</title>
        <authorList>
            <person name="Chen Y."/>
            <person name="Crombie A."/>
            <person name="Rahman M.T."/>
            <person name="Dedysh S.N."/>
            <person name="Liesack W."/>
            <person name="Stott M.B."/>
            <person name="Alam M."/>
            <person name="Theisen A.R."/>
            <person name="Murrell J.C."/>
            <person name="Dunfield P.F."/>
        </authorList>
    </citation>
    <scope>NUCLEOTIDE SEQUENCE [LARGE SCALE GENOMIC DNA]</scope>
    <source>
        <strain>DSM 15510 / CIP 108128 / LMG 27833 / NCIMB 13906 / BL2</strain>
    </source>
</reference>
<sequence length="231" mass="23945">MAHIGKRISKAREGIDRVKLYPIRDAIALIKERASAKFDETVEIAMNLGVDPKHADQMVRGVVNLPNGTGRTLRVAVFARGAKADEATAAGADIVGAEDLVATVQGGTIAFDRCIATPDMMPLVGRLGKVLGPRGLMPNPKVGTVTMDVAAAVKASKGGAVEFRVEKAGIIQGSVGKASFDDDKLAENIAAFVDAVAKAKPQGAKGTYIQRVAISSTMGPGVKVDPATLTA</sequence>
<gene>
    <name evidence="1" type="primary">rplA</name>
    <name type="ordered locus">Msil_3865</name>
</gene>
<name>RL1_METSB</name>
<dbReference type="EMBL" id="CP001280">
    <property type="protein sequence ID" value="ACK52747.1"/>
    <property type="molecule type" value="Genomic_DNA"/>
</dbReference>
<dbReference type="RefSeq" id="WP_012592815.1">
    <property type="nucleotide sequence ID" value="NC_011666.1"/>
</dbReference>
<dbReference type="SMR" id="B8EMR8"/>
<dbReference type="STRING" id="395965.Msil_3865"/>
<dbReference type="KEGG" id="msl:Msil_3865"/>
<dbReference type="eggNOG" id="COG0081">
    <property type="taxonomic scope" value="Bacteria"/>
</dbReference>
<dbReference type="HOGENOM" id="CLU_062853_0_0_5"/>
<dbReference type="OrthoDB" id="9803740at2"/>
<dbReference type="Proteomes" id="UP000002257">
    <property type="component" value="Chromosome"/>
</dbReference>
<dbReference type="GO" id="GO:0022625">
    <property type="term" value="C:cytosolic large ribosomal subunit"/>
    <property type="evidence" value="ECO:0007669"/>
    <property type="project" value="TreeGrafter"/>
</dbReference>
<dbReference type="GO" id="GO:0019843">
    <property type="term" value="F:rRNA binding"/>
    <property type="evidence" value="ECO:0007669"/>
    <property type="project" value="UniProtKB-UniRule"/>
</dbReference>
<dbReference type="GO" id="GO:0003735">
    <property type="term" value="F:structural constituent of ribosome"/>
    <property type="evidence" value="ECO:0007669"/>
    <property type="project" value="InterPro"/>
</dbReference>
<dbReference type="GO" id="GO:0000049">
    <property type="term" value="F:tRNA binding"/>
    <property type="evidence" value="ECO:0007669"/>
    <property type="project" value="UniProtKB-KW"/>
</dbReference>
<dbReference type="GO" id="GO:0006417">
    <property type="term" value="P:regulation of translation"/>
    <property type="evidence" value="ECO:0007669"/>
    <property type="project" value="UniProtKB-KW"/>
</dbReference>
<dbReference type="GO" id="GO:0006412">
    <property type="term" value="P:translation"/>
    <property type="evidence" value="ECO:0007669"/>
    <property type="project" value="UniProtKB-UniRule"/>
</dbReference>
<dbReference type="CDD" id="cd00403">
    <property type="entry name" value="Ribosomal_L1"/>
    <property type="match status" value="1"/>
</dbReference>
<dbReference type="FunFam" id="3.40.50.790:FF:000001">
    <property type="entry name" value="50S ribosomal protein L1"/>
    <property type="match status" value="1"/>
</dbReference>
<dbReference type="Gene3D" id="3.30.190.20">
    <property type="match status" value="1"/>
</dbReference>
<dbReference type="Gene3D" id="3.40.50.790">
    <property type="match status" value="1"/>
</dbReference>
<dbReference type="HAMAP" id="MF_01318_B">
    <property type="entry name" value="Ribosomal_uL1_B"/>
    <property type="match status" value="1"/>
</dbReference>
<dbReference type="InterPro" id="IPR005878">
    <property type="entry name" value="Ribosom_uL1_bac-type"/>
</dbReference>
<dbReference type="InterPro" id="IPR002143">
    <property type="entry name" value="Ribosomal_uL1"/>
</dbReference>
<dbReference type="InterPro" id="IPR023674">
    <property type="entry name" value="Ribosomal_uL1-like"/>
</dbReference>
<dbReference type="InterPro" id="IPR028364">
    <property type="entry name" value="Ribosomal_uL1/biogenesis"/>
</dbReference>
<dbReference type="InterPro" id="IPR016095">
    <property type="entry name" value="Ribosomal_uL1_3-a/b-sand"/>
</dbReference>
<dbReference type="InterPro" id="IPR023673">
    <property type="entry name" value="Ribosomal_uL1_CS"/>
</dbReference>
<dbReference type="NCBIfam" id="TIGR01169">
    <property type="entry name" value="rplA_bact"/>
    <property type="match status" value="1"/>
</dbReference>
<dbReference type="PANTHER" id="PTHR36427">
    <property type="entry name" value="54S RIBOSOMAL PROTEIN L1, MITOCHONDRIAL"/>
    <property type="match status" value="1"/>
</dbReference>
<dbReference type="PANTHER" id="PTHR36427:SF3">
    <property type="entry name" value="LARGE RIBOSOMAL SUBUNIT PROTEIN UL1M"/>
    <property type="match status" value="1"/>
</dbReference>
<dbReference type="Pfam" id="PF00687">
    <property type="entry name" value="Ribosomal_L1"/>
    <property type="match status" value="1"/>
</dbReference>
<dbReference type="PIRSF" id="PIRSF002155">
    <property type="entry name" value="Ribosomal_L1"/>
    <property type="match status" value="1"/>
</dbReference>
<dbReference type="SUPFAM" id="SSF56808">
    <property type="entry name" value="Ribosomal protein L1"/>
    <property type="match status" value="1"/>
</dbReference>
<dbReference type="PROSITE" id="PS01199">
    <property type="entry name" value="RIBOSOMAL_L1"/>
    <property type="match status" value="1"/>
</dbReference>
<comment type="function">
    <text evidence="1">Binds directly to 23S rRNA. The L1 stalk is quite mobile in the ribosome, and is involved in E site tRNA release.</text>
</comment>
<comment type="function">
    <text evidence="1">Protein L1 is also a translational repressor protein, it controls the translation of the L11 operon by binding to its mRNA.</text>
</comment>
<comment type="subunit">
    <text evidence="1">Part of the 50S ribosomal subunit.</text>
</comment>
<comment type="similarity">
    <text evidence="1">Belongs to the universal ribosomal protein uL1 family.</text>
</comment>
<evidence type="ECO:0000255" key="1">
    <source>
        <dbReference type="HAMAP-Rule" id="MF_01318"/>
    </source>
</evidence>
<evidence type="ECO:0000305" key="2"/>
<protein>
    <recommendedName>
        <fullName evidence="1">Large ribosomal subunit protein uL1</fullName>
    </recommendedName>
    <alternativeName>
        <fullName evidence="2">50S ribosomal protein L1</fullName>
    </alternativeName>
</protein>
<proteinExistence type="inferred from homology"/>
<feature type="chain" id="PRO_1000165690" description="Large ribosomal subunit protein uL1">
    <location>
        <begin position="1"/>
        <end position="231"/>
    </location>
</feature>
<keyword id="KW-1185">Reference proteome</keyword>
<keyword id="KW-0678">Repressor</keyword>
<keyword id="KW-0687">Ribonucleoprotein</keyword>
<keyword id="KW-0689">Ribosomal protein</keyword>
<keyword id="KW-0694">RNA-binding</keyword>
<keyword id="KW-0699">rRNA-binding</keyword>
<keyword id="KW-0810">Translation regulation</keyword>
<keyword id="KW-0820">tRNA-binding</keyword>